<sequence>MNYATVNDLCARYTRTRLDILTRPKTADGQPDDAVAEQALADASAFIDGYLAARFVLPLTVVPSLLKRQCCVVAWFYLNESQPTEQITATYRDTVRWLEQVRDGKTDPGVESRTAASPEGEDLVQVQSDPPVFSRKQKGFI</sequence>
<dbReference type="EMBL" id="AF083977">
    <property type="protein sequence ID" value="AAF01114.1"/>
    <property type="molecule type" value="Genomic_DNA"/>
</dbReference>
<dbReference type="RefSeq" id="NP_050640.1">
    <property type="nucleotide sequence ID" value="NC_000929.1"/>
</dbReference>
<dbReference type="PDB" id="5YDN">
    <property type="method" value="X-ray"/>
    <property type="resolution" value="1.60 A"/>
    <property type="chains" value="A=1-109"/>
</dbReference>
<dbReference type="PDB" id="9KHX">
    <property type="method" value="EM"/>
    <property type="resolution" value="3.40 A"/>
    <property type="chains" value="A/B/C/D/E/F/G/H/I/J/K/L=1-141"/>
</dbReference>
<dbReference type="PDB" id="9KNU">
    <property type="method" value="EM"/>
    <property type="resolution" value="3.60 A"/>
    <property type="chains" value="M/N/O/P/Q/R/S/T/U/V/W/X=1-141"/>
</dbReference>
<dbReference type="PDBsum" id="5YDN"/>
<dbReference type="PDBsum" id="9KHX"/>
<dbReference type="PDBsum" id="9KNU"/>
<dbReference type="EMDB" id="EMD-62358"/>
<dbReference type="EMDB" id="EMD-62462"/>
<dbReference type="SMR" id="Q9T1V9"/>
<dbReference type="GeneID" id="2636296"/>
<dbReference type="KEGG" id="vg:2636296"/>
<dbReference type="Proteomes" id="UP000002611">
    <property type="component" value="Genome"/>
</dbReference>
<dbReference type="GO" id="GO:0030430">
    <property type="term" value="C:host cell cytoplasm"/>
    <property type="evidence" value="ECO:0007669"/>
    <property type="project" value="UniProtKB-SubCell"/>
</dbReference>
<dbReference type="InterPro" id="IPR009752">
    <property type="entry name" value="Phage_Mu_GpJ"/>
</dbReference>
<dbReference type="Pfam" id="PF07030">
    <property type="entry name" value="Phage_Mu_Gp36"/>
    <property type="match status" value="1"/>
</dbReference>
<evidence type="ECO:0000256" key="1">
    <source>
        <dbReference type="SAM" id="MobiDB-lite"/>
    </source>
</evidence>
<evidence type="ECO:0000269" key="2">
    <source>
    </source>
</evidence>
<evidence type="ECO:0000269" key="3">
    <source>
    </source>
</evidence>
<evidence type="ECO:0000305" key="4"/>
<evidence type="ECO:0007829" key="5">
    <source>
        <dbReference type="PDB" id="5YDN"/>
    </source>
</evidence>
<organismHost>
    <name type="scientific">Enterobacteriaceae</name>
    <dbReference type="NCBI Taxonomy" id="543"/>
</organismHost>
<reference key="1">
    <citation type="journal article" date="2002" name="J. Mol. Biol.">
        <title>Bacteriophage Mu genome sequence: analysis and comparison with Mu-like prophages in Haemophilus, Neisseria and Deinococcus.</title>
        <authorList>
            <person name="Morgan G.J."/>
            <person name="Hatfull G.F."/>
            <person name="Casjens S."/>
            <person name="Hendrix R.W."/>
        </authorList>
    </citation>
    <scope>NUCLEOTIDE SEQUENCE [LARGE SCALE GENOMIC DNA]</scope>
</reference>
<reference key="2">
    <citation type="journal article" date="1985" name="Virology">
        <title>Morphogenetic structures present in lysates of amber mutants of bacteriophage Mu.</title>
        <authorList>
            <person name="Grundy F.J."/>
            <person name="Howe M.M."/>
        </authorList>
    </citation>
    <scope>DISRUPTION PHENOTYPE</scope>
</reference>
<reference key="3">
    <citation type="journal article" date="1993" name="Genetics">
        <title>Mutational analysis of a C-dependent late promoter of bacteriophage Mu.</title>
        <authorList>
            <person name="Chiang L.W."/>
            <person name="Howe M.M."/>
        </authorList>
    </citation>
    <scope>INDUCTION</scope>
</reference>
<reference key="4">
    <citation type="journal article" date="2010" name="FEMS Microbiol. Lett.">
        <title>Identification of the J and K genes in the bacteriophage Mu genome sequence.</title>
        <authorList>
            <person name="Smith M.L."/>
            <person name="Avanigadda L.N."/>
            <person name="Liddell P.W."/>
            <person name="Kenwright K.M."/>
            <person name="Howe M.M."/>
        </authorList>
    </citation>
    <scope>IDENTIFICATION</scope>
</reference>
<organism>
    <name type="scientific">Escherichia phage Mu</name>
    <name type="common">Bacteriophage Mu</name>
    <dbReference type="NCBI Taxonomy" id="2681603"/>
    <lineage>
        <taxon>Viruses</taxon>
        <taxon>Duplodnaviria</taxon>
        <taxon>Heunggongvirae</taxon>
        <taxon>Uroviricota</taxon>
        <taxon>Caudoviricetes</taxon>
        <taxon>Muvirus</taxon>
        <taxon>Muvirus mu</taxon>
    </lineage>
</organism>
<keyword id="KW-0002">3D-structure</keyword>
<keyword id="KW-1035">Host cytoplasm</keyword>
<keyword id="KW-0426">Late protein</keyword>
<keyword id="KW-1185">Reference proteome</keyword>
<comment type="subcellular location">
    <subcellularLocation>
        <location evidence="4">Host cytoplasm</location>
    </subcellularLocation>
</comment>
<comment type="induction">
    <text evidence="3">Expressed in the late phase of the viral replicative cycle. Expression of late genes is activated by the viral late transcription activator C.</text>
</comment>
<comment type="disruption phenotype">
    <text evidence="2">Accumulation of unattached tails and full heads.</text>
</comment>
<name>GPJ_BPMU</name>
<feature type="chain" id="PRO_0000077828" description="Gene product J">
    <location>
        <begin position="1"/>
        <end position="141"/>
    </location>
</feature>
<feature type="region of interest" description="Disordered" evidence="1">
    <location>
        <begin position="102"/>
        <end position="141"/>
    </location>
</feature>
<feature type="helix" evidence="5">
    <location>
        <begin position="6"/>
        <end position="13"/>
    </location>
</feature>
<feature type="helix" evidence="5">
    <location>
        <begin position="15"/>
        <end position="22"/>
    </location>
</feature>
<feature type="helix" evidence="5">
    <location>
        <begin position="23"/>
        <end position="25"/>
    </location>
</feature>
<feature type="strand" evidence="5">
    <location>
        <begin position="26"/>
        <end position="28"/>
    </location>
</feature>
<feature type="helix" evidence="5">
    <location>
        <begin position="33"/>
        <end position="51"/>
    </location>
</feature>
<feature type="turn" evidence="5">
    <location>
        <begin position="52"/>
        <end position="54"/>
    </location>
</feature>
<feature type="helix" evidence="5">
    <location>
        <begin position="64"/>
        <end position="78"/>
    </location>
</feature>
<feature type="turn" evidence="5">
    <location>
        <begin position="79"/>
        <end position="81"/>
    </location>
</feature>
<feature type="helix" evidence="5">
    <location>
        <begin position="85"/>
        <end position="102"/>
    </location>
</feature>
<proteinExistence type="evidence at protein level"/>
<gene>
    <name type="primary">J</name>
    <name type="ordered locus">Mup36</name>
</gene>
<accession>Q9T1V9</accession>
<protein>
    <recommendedName>
        <fullName>Gene product J</fullName>
        <shortName>gpJ</shortName>
    </recommendedName>
    <alternativeName>
        <fullName>Gene product 36</fullName>
        <shortName>gp36</shortName>
    </alternativeName>
</protein>